<keyword id="KW-0025">Alternative splicing</keyword>
<keyword id="KW-0131">Cell cycle</keyword>
<keyword id="KW-0175">Coiled coil</keyword>
<keyword id="KW-0963">Cytoplasm</keyword>
<keyword id="KW-0338">Growth arrest</keyword>
<keyword id="KW-0597">Phosphoprotein</keyword>
<keyword id="KW-1267">Proteomics identification</keyword>
<keyword id="KW-1185">Reference proteome</keyword>
<keyword id="KW-0728">SH3 domain</keyword>
<gene>
    <name evidence="21" type="primary">SGSM3</name>
    <name evidence="13" type="synonym">MAP</name>
    <name evidence="17" type="synonym">RABGAPLP</name>
    <name evidence="15" type="synonym">RUTBC3</name>
</gene>
<name>SGSM3_HUMAN</name>
<reference evidence="14 16" key="1">
    <citation type="journal article" date="2004" name="Biochem. Biophys. Res. Commun.">
        <title>MAP, a protein interacting with a tumor suppressor, merlin, through the run domain.</title>
        <authorList>
            <person name="Lee I.K."/>
            <person name="Kim K.-S."/>
            <person name="Kim H."/>
            <person name="Lee J.Y."/>
            <person name="Ryu C.H."/>
            <person name="Chun H.J."/>
            <person name="Lee K.-U."/>
            <person name="Lim Y."/>
            <person name="Kim Y.H."/>
            <person name="Huh P.-W."/>
            <person name="Lee K.-H."/>
            <person name="Han S.-I."/>
            <person name="Jun T.-Y."/>
            <person name="Rha H.K."/>
        </authorList>
    </citation>
    <scope>NUCLEOTIDE SEQUENCE [MRNA] (ISOFORM 1)</scope>
    <scope>FUNCTION</scope>
    <scope>INTERACTION WITH NF2</scope>
</reference>
<reference evidence="14 17" key="2">
    <citation type="journal article" date="2005" name="Biosci. Biotechnol. Biochem.">
        <title>Identification of Rab GTPase-activating protein-like protein (RabGAPLP) as a novel Alix/AIP1-interacting protein.</title>
        <authorList>
            <person name="Ichioka F."/>
            <person name="Horii M."/>
            <person name="Katoh K."/>
            <person name="Terasawa Y."/>
            <person name="Shibata H."/>
            <person name="Maki M."/>
        </authorList>
    </citation>
    <scope>NUCLEOTIDE SEQUENCE [MRNA] (ISOFORM 1)</scope>
    <scope>INTERACTION WITH PDCD6IP</scope>
    <scope>SUBCELLULAR LOCATION</scope>
    <source>
        <tissue evidence="10">Fetus</tissue>
    </source>
</reference>
<reference evidence="14 18" key="3">
    <citation type="journal article" date="2007" name="Genomics">
        <title>Identification of three novel proteins (SGSM1, 2, 3) which modulate small G protein (RAP and RAB)-mediated signaling pathway.</title>
        <authorList>
            <person name="Yang H."/>
            <person name="Sasaki T."/>
            <person name="Minoshima S."/>
            <person name="Shimizu N."/>
        </authorList>
    </citation>
    <scope>NUCLEOTIDE SEQUENCE [MRNA] (ISOFORM 1)</scope>
    <scope>INTERACTION WITH RAB3A; RAB4A; RAB5A; RAB8A; RAB11A; RAP1A; RAP1B; RAP2A AND RAP2B</scope>
    <scope>TISSUE SPECIFICITY</scope>
    <source>
        <tissue evidence="11">Brain</tissue>
    </source>
</reference>
<reference evidence="14 19" key="4">
    <citation type="journal article" date="2004" name="Genome Biol.">
        <title>A genome annotation-driven approach to cloning the human ORFeome.</title>
        <authorList>
            <person name="Collins J.E."/>
            <person name="Wright C.L."/>
            <person name="Edwards C.A."/>
            <person name="Davis M.P."/>
            <person name="Grinham J.A."/>
            <person name="Cole C.G."/>
            <person name="Goward M.E."/>
            <person name="Aguado B."/>
            <person name="Mallya M."/>
            <person name="Mokrab Y."/>
            <person name="Huckle E.J."/>
            <person name="Beare D.M."/>
            <person name="Dunham I."/>
        </authorList>
    </citation>
    <scope>NUCLEOTIDE SEQUENCE [LARGE SCALE MRNA] (ISOFORM 1)</scope>
</reference>
<reference key="5">
    <citation type="journal article" date="1999" name="Nature">
        <title>The DNA sequence of human chromosome 22.</title>
        <authorList>
            <person name="Dunham I."/>
            <person name="Hunt A.R."/>
            <person name="Collins J.E."/>
            <person name="Bruskiewich R."/>
            <person name="Beare D.M."/>
            <person name="Clamp M."/>
            <person name="Smink L.J."/>
            <person name="Ainscough R."/>
            <person name="Almeida J.P."/>
            <person name="Babbage A.K."/>
            <person name="Bagguley C."/>
            <person name="Bailey J."/>
            <person name="Barlow K.F."/>
            <person name="Bates K.N."/>
            <person name="Beasley O.P."/>
            <person name="Bird C.P."/>
            <person name="Blakey S.E."/>
            <person name="Bridgeman A.M."/>
            <person name="Buck D."/>
            <person name="Burgess J."/>
            <person name="Burrill W.D."/>
            <person name="Burton J."/>
            <person name="Carder C."/>
            <person name="Carter N.P."/>
            <person name="Chen Y."/>
            <person name="Clark G."/>
            <person name="Clegg S.M."/>
            <person name="Cobley V.E."/>
            <person name="Cole C.G."/>
            <person name="Collier R.E."/>
            <person name="Connor R."/>
            <person name="Conroy D."/>
            <person name="Corby N.R."/>
            <person name="Coville G.J."/>
            <person name="Cox A.V."/>
            <person name="Davis J."/>
            <person name="Dawson E."/>
            <person name="Dhami P.D."/>
            <person name="Dockree C."/>
            <person name="Dodsworth S.J."/>
            <person name="Durbin R.M."/>
            <person name="Ellington A.G."/>
            <person name="Evans K.L."/>
            <person name="Fey J.M."/>
            <person name="Fleming K."/>
            <person name="French L."/>
            <person name="Garner A.A."/>
            <person name="Gilbert J.G.R."/>
            <person name="Goward M.E."/>
            <person name="Grafham D.V."/>
            <person name="Griffiths M.N.D."/>
            <person name="Hall C."/>
            <person name="Hall R.E."/>
            <person name="Hall-Tamlyn G."/>
            <person name="Heathcott R.W."/>
            <person name="Ho S."/>
            <person name="Holmes S."/>
            <person name="Hunt S.E."/>
            <person name="Jones M.C."/>
            <person name="Kershaw J."/>
            <person name="Kimberley A.M."/>
            <person name="King A."/>
            <person name="Laird G.K."/>
            <person name="Langford C.F."/>
            <person name="Leversha M.A."/>
            <person name="Lloyd C."/>
            <person name="Lloyd D.M."/>
            <person name="Martyn I.D."/>
            <person name="Mashreghi-Mohammadi M."/>
            <person name="Matthews L.H."/>
            <person name="Mccann O.T."/>
            <person name="Mcclay J."/>
            <person name="Mclaren S."/>
            <person name="McMurray A.A."/>
            <person name="Milne S.A."/>
            <person name="Mortimore B.J."/>
            <person name="Odell C.N."/>
            <person name="Pavitt R."/>
            <person name="Pearce A.V."/>
            <person name="Pearson D."/>
            <person name="Phillimore B.J.C.T."/>
            <person name="Phillips S.H."/>
            <person name="Plumb R.W."/>
            <person name="Ramsay H."/>
            <person name="Ramsey Y."/>
            <person name="Rogers L."/>
            <person name="Ross M.T."/>
            <person name="Scott C.E."/>
            <person name="Sehra H.K."/>
            <person name="Skuce C.D."/>
            <person name="Smalley S."/>
            <person name="Smith M.L."/>
            <person name="Soderlund C."/>
            <person name="Spragon L."/>
            <person name="Steward C.A."/>
            <person name="Sulston J.E."/>
            <person name="Swann R.M."/>
            <person name="Vaudin M."/>
            <person name="Wall M."/>
            <person name="Wallis J.M."/>
            <person name="Whiteley M.N."/>
            <person name="Willey D.L."/>
            <person name="Williams L."/>
            <person name="Williams S.A."/>
            <person name="Williamson H."/>
            <person name="Wilmer T.E."/>
            <person name="Wilming L."/>
            <person name="Wright C.L."/>
            <person name="Hubbard T."/>
            <person name="Bentley D.R."/>
            <person name="Beck S."/>
            <person name="Rogers J."/>
            <person name="Shimizu N."/>
            <person name="Minoshima S."/>
            <person name="Kawasaki K."/>
            <person name="Sasaki T."/>
            <person name="Asakawa S."/>
            <person name="Kudoh J."/>
            <person name="Shintani A."/>
            <person name="Shibuya K."/>
            <person name="Yoshizaki Y."/>
            <person name="Aoki N."/>
            <person name="Mitsuyama S."/>
            <person name="Roe B.A."/>
            <person name="Chen F."/>
            <person name="Chu L."/>
            <person name="Crabtree J."/>
            <person name="Deschamps S."/>
            <person name="Do A."/>
            <person name="Do T."/>
            <person name="Dorman A."/>
            <person name="Fang F."/>
            <person name="Fu Y."/>
            <person name="Hu P."/>
            <person name="Hua A."/>
            <person name="Kenton S."/>
            <person name="Lai H."/>
            <person name="Lao H.I."/>
            <person name="Lewis J."/>
            <person name="Lewis S."/>
            <person name="Lin S.-P."/>
            <person name="Loh P."/>
            <person name="Malaj E."/>
            <person name="Nguyen T."/>
            <person name="Pan H."/>
            <person name="Phan S."/>
            <person name="Qi S."/>
            <person name="Qian Y."/>
            <person name="Ray L."/>
            <person name="Ren Q."/>
            <person name="Shaull S."/>
            <person name="Sloan D."/>
            <person name="Song L."/>
            <person name="Wang Q."/>
            <person name="Wang Y."/>
            <person name="Wang Z."/>
            <person name="White J."/>
            <person name="Willingham D."/>
            <person name="Wu H."/>
            <person name="Yao Z."/>
            <person name="Zhan M."/>
            <person name="Zhang G."/>
            <person name="Chissoe S."/>
            <person name="Murray J."/>
            <person name="Miller N."/>
            <person name="Minx P."/>
            <person name="Fulton R."/>
            <person name="Johnson D."/>
            <person name="Bemis G."/>
            <person name="Bentley D."/>
            <person name="Bradshaw H."/>
            <person name="Bourne S."/>
            <person name="Cordes M."/>
            <person name="Du Z."/>
            <person name="Fulton L."/>
            <person name="Goela D."/>
            <person name="Graves T."/>
            <person name="Hawkins J."/>
            <person name="Hinds K."/>
            <person name="Kemp K."/>
            <person name="Latreille P."/>
            <person name="Layman D."/>
            <person name="Ozersky P."/>
            <person name="Rohlfing T."/>
            <person name="Scheet P."/>
            <person name="Walker C."/>
            <person name="Wamsley A."/>
            <person name="Wohldmann P."/>
            <person name="Pepin K."/>
            <person name="Nelson J."/>
            <person name="Korf I."/>
            <person name="Bedell J.A."/>
            <person name="Hillier L.W."/>
            <person name="Mardis E."/>
            <person name="Waterston R."/>
            <person name="Wilson R."/>
            <person name="Emanuel B.S."/>
            <person name="Shaikh T."/>
            <person name="Kurahashi H."/>
            <person name="Saitta S."/>
            <person name="Budarf M.L."/>
            <person name="McDermid H.E."/>
            <person name="Johnson A."/>
            <person name="Wong A.C.C."/>
            <person name="Morrow B.E."/>
            <person name="Edelmann L."/>
            <person name="Kim U.J."/>
            <person name="Shizuya H."/>
            <person name="Simon M.I."/>
            <person name="Dumanski J.P."/>
            <person name="Peyrard M."/>
            <person name="Kedra D."/>
            <person name="Seroussi E."/>
            <person name="Fransson I."/>
            <person name="Tapia I."/>
            <person name="Bruder C.E."/>
            <person name="O'Brien K.P."/>
            <person name="Wilkinson P."/>
            <person name="Bodenteich A."/>
            <person name="Hartman K."/>
            <person name="Hu X."/>
            <person name="Khan A.S."/>
            <person name="Lane L."/>
            <person name="Tilahun Y."/>
            <person name="Wright H."/>
        </authorList>
    </citation>
    <scope>NUCLEOTIDE SEQUENCE [LARGE SCALE GENOMIC DNA]</scope>
</reference>
<reference evidence="14 20" key="6">
    <citation type="submission" date="2005-07" db="EMBL/GenBank/DDBJ databases">
        <authorList>
            <person name="Mural R.J."/>
            <person name="Istrail S."/>
            <person name="Sutton G.G."/>
            <person name="Florea L."/>
            <person name="Halpern A.L."/>
            <person name="Mobarry C.M."/>
            <person name="Lippert R."/>
            <person name="Walenz B."/>
            <person name="Shatkay H."/>
            <person name="Dew I."/>
            <person name="Miller J.R."/>
            <person name="Flanigan M.J."/>
            <person name="Edwards N.J."/>
            <person name="Bolanos R."/>
            <person name="Fasulo D."/>
            <person name="Halldorsson B.V."/>
            <person name="Hannenhalli S."/>
            <person name="Turner R."/>
            <person name="Yooseph S."/>
            <person name="Lu F."/>
            <person name="Nusskern D.R."/>
            <person name="Shue B.C."/>
            <person name="Zheng X.H."/>
            <person name="Zhong F."/>
            <person name="Delcher A.L."/>
            <person name="Huson D.H."/>
            <person name="Kravitz S.A."/>
            <person name="Mouchard L."/>
            <person name="Reinert K."/>
            <person name="Remington K.A."/>
            <person name="Clark A.G."/>
            <person name="Waterman M.S."/>
            <person name="Eichler E.E."/>
            <person name="Adams M.D."/>
            <person name="Hunkapiller M.W."/>
            <person name="Myers E.W."/>
            <person name="Venter J.C."/>
        </authorList>
    </citation>
    <scope>NUCLEOTIDE SEQUENCE [LARGE SCALE GENOMIC DNA]</scope>
</reference>
<reference evidence="14 15" key="7">
    <citation type="journal article" date="2004" name="Genome Res.">
        <title>The status, quality, and expansion of the NIH full-length cDNA project: the Mammalian Gene Collection (MGC).</title>
        <authorList>
            <consortium name="The MGC Project Team"/>
        </authorList>
    </citation>
    <scope>NUCLEOTIDE SEQUENCE [LARGE SCALE MRNA] (ISOFORM 1)</scope>
    <source>
        <tissue evidence="15">Rhabdomyosarcoma</tissue>
    </source>
</reference>
<reference key="8">
    <citation type="journal article" date="2007" name="BMC Genomics">
        <title>The full-ORF clone resource of the German cDNA consortium.</title>
        <authorList>
            <person name="Bechtel S."/>
            <person name="Rosenfelder H."/>
            <person name="Duda A."/>
            <person name="Schmidt C.P."/>
            <person name="Ernst U."/>
            <person name="Wellenreuther R."/>
            <person name="Mehrle A."/>
            <person name="Schuster C."/>
            <person name="Bahr A."/>
            <person name="Bloecker H."/>
            <person name="Heubner D."/>
            <person name="Hoerlein A."/>
            <person name="Michel G."/>
            <person name="Wedler H."/>
            <person name="Koehrer K."/>
            <person name="Ottenwaelder B."/>
            <person name="Poustka A."/>
            <person name="Wiemann S."/>
            <person name="Schupp I."/>
        </authorList>
    </citation>
    <scope>NUCLEOTIDE SEQUENCE [LARGE SCALE MRNA] OF 615-749</scope>
    <source>
        <tissue>Amygdala</tissue>
    </source>
</reference>
<reference key="9">
    <citation type="journal article" date="2008" name="Proc. Natl. Acad. Sci. U.S.A.">
        <title>A quantitative atlas of mitotic phosphorylation.</title>
        <authorList>
            <person name="Dephoure N."/>
            <person name="Zhou C."/>
            <person name="Villen J."/>
            <person name="Beausoleil S.A."/>
            <person name="Bakalarski C.E."/>
            <person name="Elledge S.J."/>
            <person name="Gygi S.P."/>
        </authorList>
    </citation>
    <scope>IDENTIFICATION BY MASS SPECTROMETRY [LARGE SCALE ANALYSIS]</scope>
    <source>
        <tissue>Cervix carcinoma</tissue>
    </source>
</reference>
<proteinExistence type="evidence at protein level"/>
<sequence length="749" mass="85354">MSGSHTPACGPFSALTPSIWPQEILAKYTQKEESAEQPEFYYDEFGFRVYKEEGDEPGSSLLANSPLMEDAPQRLRWQAHLEFTHNHDVGDLTWDKIAVSLPRSEKLRSLVLAGIPHGMRPQLWMRLSGALQKKRNSELSYREIVKNSSNDETIAAKQIEKDLLRTMPSNACFASMGSIGVPRLRRVLRALAWLYPEIGYCQGTGMVAACLLLFLEEEDAFWMMSAIIEDLLPASYFSTTLLGVQTDQRVLRHLIVQYLPRLDKLLQEHDIELSLITLHWFLTAFASVVDIKLLLRIWDLFFYEGSRVLFQLTLGMLHLKEEELIQSENSASIFNTLSDIPSQMEDAELLLGVAMRLAGSLTDVAVETQRRKHLAYLIADQGQLLGAGTLTNLSQVVRRRTQRRKSTITALLFGEDDLEALKAKNIKQTELVADLREAILRVARHFQCTDPKNCSVELTPDYSMESHQRDHENYVACSRSHRRRAKALLDFERHDDDELGFRKNDIITIVSQKDEHCWVGELNGLRGWFPAKFVEVLDERSKEYSIAGDDSVTEGVTDLVRGTLCPALKALFEHGLKKPSLLGGACHPWLFIEEAAGREVERDFASVYSRLVLCKTFRLDEDGKVLTPEELLYRAVQSVNVTHDAVHAQMDVKLRSLICVGLNEQVLHLWLEVLCSSLPTVEKWYQPWSFLRSPGWVQIKCELRVLCCFAFSLSQDWELPAKREAQQPLKEGVRDMLVKHHLFSWDVDG</sequence>
<evidence type="ECO:0000250" key="1">
    <source>
        <dbReference type="UniProtKB" id="Q8VCZ6"/>
    </source>
</evidence>
<evidence type="ECO:0000255" key="2"/>
<evidence type="ECO:0000255" key="3">
    <source>
        <dbReference type="PROSITE-ProRule" id="PRU00163"/>
    </source>
</evidence>
<evidence type="ECO:0000255" key="4">
    <source>
        <dbReference type="PROSITE-ProRule" id="PRU00178"/>
    </source>
</evidence>
<evidence type="ECO:0000255" key="5">
    <source>
        <dbReference type="PROSITE-ProRule" id="PRU00192"/>
    </source>
</evidence>
<evidence type="ECO:0000269" key="6">
    <source>
    </source>
</evidence>
<evidence type="ECO:0000269" key="7">
    <source>
    </source>
</evidence>
<evidence type="ECO:0000269" key="8">
    <source>
    </source>
</evidence>
<evidence type="ECO:0000269" key="9">
    <source>
    </source>
</evidence>
<evidence type="ECO:0000269" key="10">
    <source>
    </source>
</evidence>
<evidence type="ECO:0000269" key="11">
    <source>
    </source>
</evidence>
<evidence type="ECO:0000303" key="12">
    <source>
    </source>
</evidence>
<evidence type="ECO:0000303" key="13">
    <source>
    </source>
</evidence>
<evidence type="ECO:0000305" key="14"/>
<evidence type="ECO:0000312" key="15">
    <source>
        <dbReference type="EMBL" id="AAH08078.1"/>
    </source>
</evidence>
<evidence type="ECO:0000312" key="16">
    <source>
        <dbReference type="EMBL" id="AAQ81879.1"/>
    </source>
</evidence>
<evidence type="ECO:0000312" key="17">
    <source>
        <dbReference type="EMBL" id="BAE02561.1"/>
    </source>
</evidence>
<evidence type="ECO:0000312" key="18">
    <source>
        <dbReference type="EMBL" id="BAF63513.1"/>
    </source>
</evidence>
<evidence type="ECO:0000312" key="19">
    <source>
        <dbReference type="EMBL" id="CAG30327.1"/>
    </source>
</evidence>
<evidence type="ECO:0000312" key="20">
    <source>
        <dbReference type="EMBL" id="EAW60379.1"/>
    </source>
</evidence>
<evidence type="ECO:0000312" key="21">
    <source>
        <dbReference type="HGNC" id="HGNC:25228"/>
    </source>
</evidence>
<dbReference type="EMBL" id="AY308849">
    <property type="protein sequence ID" value="AAQ81879.1"/>
    <property type="molecule type" value="mRNA"/>
</dbReference>
<dbReference type="EMBL" id="AB196956">
    <property type="protein sequence ID" value="BAE02561.1"/>
    <property type="molecule type" value="mRNA"/>
</dbReference>
<dbReference type="EMBL" id="AB275763">
    <property type="protein sequence ID" value="BAF63513.1"/>
    <property type="molecule type" value="mRNA"/>
</dbReference>
<dbReference type="EMBL" id="CR456441">
    <property type="protein sequence ID" value="CAG30327.1"/>
    <property type="molecule type" value="mRNA"/>
</dbReference>
<dbReference type="EMBL" id="AL022238">
    <property type="status" value="NOT_ANNOTATED_CDS"/>
    <property type="molecule type" value="Genomic_DNA"/>
</dbReference>
<dbReference type="EMBL" id="CH471095">
    <property type="protein sequence ID" value="EAW60378.1"/>
    <property type="molecule type" value="Genomic_DNA"/>
</dbReference>
<dbReference type="EMBL" id="CH471095">
    <property type="protein sequence ID" value="EAW60379.1"/>
    <property type="molecule type" value="Genomic_DNA"/>
</dbReference>
<dbReference type="EMBL" id="BC008078">
    <property type="protein sequence ID" value="AAH08078.1"/>
    <property type="molecule type" value="mRNA"/>
</dbReference>
<dbReference type="EMBL" id="AL137499">
    <property type="protein sequence ID" value="CAB70773.1"/>
    <property type="molecule type" value="mRNA"/>
</dbReference>
<dbReference type="CCDS" id="CCDS14002.1">
    <molecule id="Q96HU1-1"/>
</dbReference>
<dbReference type="PIR" id="T46252">
    <property type="entry name" value="T46252"/>
</dbReference>
<dbReference type="RefSeq" id="NP_001288778.1">
    <property type="nucleotide sequence ID" value="NM_001301849.1"/>
</dbReference>
<dbReference type="RefSeq" id="NP_056520.2">
    <molecule id="Q96HU1-1"/>
    <property type="nucleotide sequence ID" value="NM_015705.5"/>
</dbReference>
<dbReference type="SMR" id="Q96HU1"/>
<dbReference type="BioGRID" id="118164">
    <property type="interactions" value="25"/>
</dbReference>
<dbReference type="FunCoup" id="Q96HU1">
    <property type="interactions" value="718"/>
</dbReference>
<dbReference type="IntAct" id="Q96HU1">
    <property type="interactions" value="10"/>
</dbReference>
<dbReference type="MINT" id="Q96HU1"/>
<dbReference type="STRING" id="9606.ENSP00000248929"/>
<dbReference type="TCDB" id="8.A.87.1.5">
    <property type="family name" value="the tbc1 domain (tbc1) family"/>
</dbReference>
<dbReference type="GlyGen" id="Q96HU1">
    <property type="glycosylation" value="1 site"/>
</dbReference>
<dbReference type="iPTMnet" id="Q96HU1"/>
<dbReference type="PhosphoSitePlus" id="Q96HU1"/>
<dbReference type="BioMuta" id="SGSM3"/>
<dbReference type="DMDM" id="74760858"/>
<dbReference type="jPOST" id="Q96HU1"/>
<dbReference type="MassIVE" id="Q96HU1"/>
<dbReference type="PaxDb" id="9606-ENSP00000248929"/>
<dbReference type="PeptideAtlas" id="Q96HU1"/>
<dbReference type="ProteomicsDB" id="76785">
    <molecule id="Q96HU1-1"/>
</dbReference>
<dbReference type="ProteomicsDB" id="76786">
    <molecule id="Q96HU1-2"/>
</dbReference>
<dbReference type="Pumba" id="Q96HU1"/>
<dbReference type="Antibodypedia" id="45865">
    <property type="antibodies" value="119 antibodies from 29 providers"/>
</dbReference>
<dbReference type="DNASU" id="27352"/>
<dbReference type="Ensembl" id="ENST00000248929.14">
    <molecule id="Q96HU1-1"/>
    <property type="protein sequence ID" value="ENSP00000248929.8"/>
    <property type="gene ID" value="ENSG00000100359.21"/>
</dbReference>
<dbReference type="GeneID" id="27352"/>
<dbReference type="KEGG" id="hsa:27352"/>
<dbReference type="MANE-Select" id="ENST00000248929.14">
    <property type="protein sequence ID" value="ENSP00000248929.8"/>
    <property type="RefSeq nucleotide sequence ID" value="NM_015705.6"/>
    <property type="RefSeq protein sequence ID" value="NP_056520.2"/>
</dbReference>
<dbReference type="UCSC" id="uc003ayu.2">
    <molecule id="Q96HU1-1"/>
    <property type="organism name" value="human"/>
</dbReference>
<dbReference type="AGR" id="HGNC:25228"/>
<dbReference type="CTD" id="27352"/>
<dbReference type="DisGeNET" id="27352"/>
<dbReference type="GeneCards" id="SGSM3"/>
<dbReference type="HGNC" id="HGNC:25228">
    <property type="gene designation" value="SGSM3"/>
</dbReference>
<dbReference type="HPA" id="ENSG00000100359">
    <property type="expression patterns" value="Low tissue specificity"/>
</dbReference>
<dbReference type="MIM" id="610440">
    <property type="type" value="gene"/>
</dbReference>
<dbReference type="neXtProt" id="NX_Q96HU1"/>
<dbReference type="OpenTargets" id="ENSG00000100359"/>
<dbReference type="PharmGKB" id="PA162403194"/>
<dbReference type="VEuPathDB" id="HostDB:ENSG00000100359"/>
<dbReference type="eggNOG" id="KOG2222">
    <property type="taxonomic scope" value="Eukaryota"/>
</dbReference>
<dbReference type="GeneTree" id="ENSGT00940000157282"/>
<dbReference type="HOGENOM" id="CLU_020721_0_0_1"/>
<dbReference type="InParanoid" id="Q96HU1"/>
<dbReference type="OMA" id="EIVQKWY"/>
<dbReference type="OrthoDB" id="44736at2759"/>
<dbReference type="PAN-GO" id="Q96HU1">
    <property type="GO annotations" value="2 GO annotations based on evolutionary models"/>
</dbReference>
<dbReference type="PhylomeDB" id="Q96HU1"/>
<dbReference type="TreeFam" id="TF317336"/>
<dbReference type="PathwayCommons" id="Q96HU1"/>
<dbReference type="SignaLink" id="Q96HU1"/>
<dbReference type="BioGRID-ORCS" id="27352">
    <property type="hits" value="11 hits in 1153 CRISPR screens"/>
</dbReference>
<dbReference type="ChiTaRS" id="SGSM3">
    <property type="organism name" value="human"/>
</dbReference>
<dbReference type="GenomeRNAi" id="27352"/>
<dbReference type="Pharos" id="Q96HU1">
    <property type="development level" value="Tbio"/>
</dbReference>
<dbReference type="PRO" id="PR:Q96HU1"/>
<dbReference type="Proteomes" id="UP000005640">
    <property type="component" value="Chromosome 22"/>
</dbReference>
<dbReference type="RNAct" id="Q96HU1">
    <property type="molecule type" value="protein"/>
</dbReference>
<dbReference type="Bgee" id="ENSG00000100359">
    <property type="expression patterns" value="Expressed in body of pancreas and 99 other cell types or tissues"/>
</dbReference>
<dbReference type="ExpressionAtlas" id="Q96HU1">
    <property type="expression patterns" value="baseline and differential"/>
</dbReference>
<dbReference type="GO" id="GO:0005829">
    <property type="term" value="C:cytosol"/>
    <property type="evidence" value="ECO:0000314"/>
    <property type="project" value="UniProtKB"/>
</dbReference>
<dbReference type="GO" id="GO:0005921">
    <property type="term" value="C:gap junction"/>
    <property type="evidence" value="ECO:0007669"/>
    <property type="project" value="Ensembl"/>
</dbReference>
<dbReference type="GO" id="GO:0005096">
    <property type="term" value="F:GTPase activator activity"/>
    <property type="evidence" value="ECO:0000314"/>
    <property type="project" value="UniProtKB"/>
</dbReference>
<dbReference type="GO" id="GO:0031267">
    <property type="term" value="F:small GTPase binding"/>
    <property type="evidence" value="ECO:0000314"/>
    <property type="project" value="UniProtKB"/>
</dbReference>
<dbReference type="GO" id="GO:0048227">
    <property type="term" value="P:plasma membrane to endosome transport"/>
    <property type="evidence" value="ECO:0000315"/>
    <property type="project" value="UniProtKB"/>
</dbReference>
<dbReference type="GO" id="GO:0043547">
    <property type="term" value="P:positive regulation of GTPase activity"/>
    <property type="evidence" value="ECO:0000314"/>
    <property type="project" value="UniProtKB"/>
</dbReference>
<dbReference type="GO" id="GO:0045732">
    <property type="term" value="P:positive regulation of protein catabolic process"/>
    <property type="evidence" value="ECO:0007669"/>
    <property type="project" value="Ensembl"/>
</dbReference>
<dbReference type="GO" id="GO:0032486">
    <property type="term" value="P:Rap protein signal transduction"/>
    <property type="evidence" value="ECO:0000270"/>
    <property type="project" value="UniProtKB"/>
</dbReference>
<dbReference type="GO" id="GO:0051726">
    <property type="term" value="P:regulation of cell cycle"/>
    <property type="evidence" value="ECO:0007669"/>
    <property type="project" value="UniProtKB-KW"/>
</dbReference>
<dbReference type="GO" id="GO:0032483">
    <property type="term" value="P:regulation of Rab protein signal transduction"/>
    <property type="evidence" value="ECO:0000270"/>
    <property type="project" value="UniProtKB"/>
</dbReference>
<dbReference type="CDD" id="cd17688">
    <property type="entry name" value="RUN_SGSM3"/>
    <property type="match status" value="1"/>
</dbReference>
<dbReference type="CDD" id="cd11813">
    <property type="entry name" value="SH3_SGSM3"/>
    <property type="match status" value="1"/>
</dbReference>
<dbReference type="FunFam" id="1.10.472.80:FF:000012">
    <property type="entry name" value="Small G protein signaling modulator 3"/>
    <property type="match status" value="1"/>
</dbReference>
<dbReference type="FunFam" id="1.10.8.270:FF:000013">
    <property type="entry name" value="Small G protein signaling modulator 3"/>
    <property type="match status" value="1"/>
</dbReference>
<dbReference type="FunFam" id="2.30.30.40:FF:000115">
    <property type="entry name" value="Small G protein signaling modulator 3 homolog"/>
    <property type="match status" value="1"/>
</dbReference>
<dbReference type="Gene3D" id="1.20.58.900">
    <property type="match status" value="1"/>
</dbReference>
<dbReference type="Gene3D" id="1.10.8.270">
    <property type="entry name" value="putative rabgap domain of human tbc1 domain family member 14 like domains"/>
    <property type="match status" value="1"/>
</dbReference>
<dbReference type="Gene3D" id="2.30.30.40">
    <property type="entry name" value="SH3 Domains"/>
    <property type="match status" value="1"/>
</dbReference>
<dbReference type="Gene3D" id="1.10.472.80">
    <property type="entry name" value="Ypt/Rab-GAP domain of gyp1p, domain 3"/>
    <property type="match status" value="1"/>
</dbReference>
<dbReference type="InterPro" id="IPR000195">
    <property type="entry name" value="Rab-GAP-TBC_dom"/>
</dbReference>
<dbReference type="InterPro" id="IPR035969">
    <property type="entry name" value="Rab-GAP_TBC_sf"/>
</dbReference>
<dbReference type="InterPro" id="IPR050302">
    <property type="entry name" value="Rab_GAP_TBC_domain"/>
</dbReference>
<dbReference type="InterPro" id="IPR004012">
    <property type="entry name" value="Run_dom"/>
</dbReference>
<dbReference type="InterPro" id="IPR037213">
    <property type="entry name" value="Run_dom_sf"/>
</dbReference>
<dbReference type="InterPro" id="IPR035833">
    <property type="entry name" value="SGSM3_SH3"/>
</dbReference>
<dbReference type="InterPro" id="IPR036028">
    <property type="entry name" value="SH3-like_dom_sf"/>
</dbReference>
<dbReference type="InterPro" id="IPR001452">
    <property type="entry name" value="SH3_domain"/>
</dbReference>
<dbReference type="PANTHER" id="PTHR47219">
    <property type="entry name" value="RAB GTPASE-ACTIVATING PROTEIN 1-LIKE"/>
    <property type="match status" value="1"/>
</dbReference>
<dbReference type="PANTHER" id="PTHR47219:SF13">
    <property type="entry name" value="RUN AND TBC1 DOMAIN-CONTAINING PROTEIN 3"/>
    <property type="match status" value="1"/>
</dbReference>
<dbReference type="Pfam" id="PF00566">
    <property type="entry name" value="RabGAP-TBC"/>
    <property type="match status" value="1"/>
</dbReference>
<dbReference type="Pfam" id="PF02759">
    <property type="entry name" value="RUN"/>
    <property type="match status" value="1"/>
</dbReference>
<dbReference type="Pfam" id="PF00018">
    <property type="entry name" value="SH3_1"/>
    <property type="match status" value="1"/>
</dbReference>
<dbReference type="SMART" id="SM00593">
    <property type="entry name" value="RUN"/>
    <property type="match status" value="1"/>
</dbReference>
<dbReference type="SMART" id="SM00326">
    <property type="entry name" value="SH3"/>
    <property type="match status" value="1"/>
</dbReference>
<dbReference type="SMART" id="SM00164">
    <property type="entry name" value="TBC"/>
    <property type="match status" value="1"/>
</dbReference>
<dbReference type="SUPFAM" id="SSF140741">
    <property type="entry name" value="RUN domain-like"/>
    <property type="match status" value="1"/>
</dbReference>
<dbReference type="SUPFAM" id="SSF50044">
    <property type="entry name" value="SH3-domain"/>
    <property type="match status" value="1"/>
</dbReference>
<dbReference type="SUPFAM" id="SSF47923">
    <property type="entry name" value="Ypt/Rab-GAP domain of gyp1p"/>
    <property type="match status" value="2"/>
</dbReference>
<dbReference type="PROSITE" id="PS50826">
    <property type="entry name" value="RUN"/>
    <property type="match status" value="1"/>
</dbReference>
<dbReference type="PROSITE" id="PS50002">
    <property type="entry name" value="SH3"/>
    <property type="match status" value="1"/>
</dbReference>
<dbReference type="PROSITE" id="PS50086">
    <property type="entry name" value="TBC_RABGAP"/>
    <property type="match status" value="1"/>
</dbReference>
<protein>
    <recommendedName>
        <fullName>Small G protein signaling modulator 3</fullName>
    </recommendedName>
    <alternativeName>
        <fullName>Merlin-associated protein</fullName>
    </alternativeName>
    <alternativeName>
        <fullName>RUN and TBC1 domain-containing protein 3</fullName>
    </alternativeName>
    <alternativeName>
        <fullName>Rab-GTPase-activating protein-like protein</fullName>
        <shortName>RabGAPLP</shortName>
    </alternativeName>
</protein>
<feature type="chain" id="PRO_0000307810" description="Small G protein signaling modulator 3">
    <location>
        <begin position="1"/>
        <end position="749"/>
    </location>
</feature>
<feature type="domain" description="Rab-GAP TBC" evidence="3">
    <location>
        <begin position="114"/>
        <end position="305"/>
    </location>
</feature>
<feature type="domain" description="SH3" evidence="5">
    <location>
        <begin position="480"/>
        <end position="539"/>
    </location>
</feature>
<feature type="domain" description="RUN" evidence="4">
    <location>
        <begin position="555"/>
        <end position="718"/>
    </location>
</feature>
<feature type="coiled-coil region" evidence="2">
    <location>
        <begin position="415"/>
        <end position="439"/>
    </location>
</feature>
<feature type="modified residue" description="Phosphoserine" evidence="1">
    <location>
        <position position="406"/>
    </location>
</feature>
<feature type="splice variant" id="VSP_052561" description="In isoform 2." evidence="12">
    <original>V</original>
    <variation>VVSRQLPGLLPNTALTPPTPLVGLCSLWQ</variation>
    <location>
        <position position="456"/>
    </location>
</feature>
<feature type="sequence variant" id="VAR_051345" description="In dbSNP:rs9611338.">
    <original>W</original>
    <variation>R</variation>
    <location>
        <position position="20"/>
    </location>
</feature>
<feature type="sequence variant" id="VAR_051346" description="In dbSNP:rs34243479.">
    <original>H</original>
    <variation>Q</variation>
    <location>
        <position position="279"/>
    </location>
</feature>
<organism>
    <name type="scientific">Homo sapiens</name>
    <name type="common">Human</name>
    <dbReference type="NCBI Taxonomy" id="9606"/>
    <lineage>
        <taxon>Eukaryota</taxon>
        <taxon>Metazoa</taxon>
        <taxon>Chordata</taxon>
        <taxon>Craniata</taxon>
        <taxon>Vertebrata</taxon>
        <taxon>Euteleostomi</taxon>
        <taxon>Mammalia</taxon>
        <taxon>Eutheria</taxon>
        <taxon>Euarchontoglires</taxon>
        <taxon>Primates</taxon>
        <taxon>Haplorrhini</taxon>
        <taxon>Catarrhini</taxon>
        <taxon>Hominidae</taxon>
        <taxon>Homo</taxon>
    </lineage>
</organism>
<accession>Q96HU1</accession>
<accession>B0QY79</accession>
<accession>Q7Z709</accession>
<accession>Q9NT69</accession>
<comment type="function">
    <text evidence="9">May play a cooperative role in NF2-mediated growth suppression of cells.</text>
</comment>
<comment type="subunit">
    <text evidence="1 9 10 11">Interacts with GJA1. Interaction with GJA1 induces its degradation (By similarity). Interacts via its RUN domain with the C-terminal region of NF2. Interacts with RAB3A, RAB4A, RAB5A, RAB8A, RAB11A, RAP1A, RAP1B, RAP2A, RAP2B and PDCD6IP. No interaction with RAB27A.</text>
</comment>
<comment type="interaction">
    <interactant intactId="EBI-7362971">
        <id>Q96HU1</id>
    </interactant>
    <interactant intactId="EBI-12361463">
        <id>P31513</id>
        <label>FMO3</label>
    </interactant>
    <organismsDiffer>false</organismsDiffer>
    <experiments>3</experiments>
</comment>
<comment type="interaction">
    <interactant intactId="EBI-7362971">
        <id>Q96HU1</id>
    </interactant>
    <interactant intactId="EBI-6149955">
        <id>Q8NC56</id>
        <label>LEMD2</label>
    </interactant>
    <organismsDiffer>false</organismsDiffer>
    <experiments>2</experiments>
</comment>
<comment type="subcellular location">
    <subcellularLocation>
        <location evidence="10">Cytoplasm</location>
    </subcellularLocation>
</comment>
<comment type="alternative products">
    <event type="alternative splicing"/>
    <isoform>
        <id>Q96HU1-1</id>
        <name evidence="7 8 9 10 11">1</name>
        <sequence type="displayed"/>
    </isoform>
    <isoform>
        <id>Q96HU1-2</id>
        <name evidence="6">2</name>
        <sequence type="described" ref="VSP_052561"/>
    </isoform>
</comment>
<comment type="tissue specificity">
    <text evidence="11">Widely expressed.</text>
</comment>
<comment type="similarity">
    <text evidence="14">Belongs to the small G protein signaling modulator family.</text>
</comment>